<keyword id="KW-0186">Copper</keyword>
<keyword id="KW-0249">Electron transport</keyword>
<keyword id="KW-0460">Magnesium</keyword>
<keyword id="KW-0472">Membrane</keyword>
<keyword id="KW-0479">Metal-binding</keyword>
<keyword id="KW-0496">Mitochondrion</keyword>
<keyword id="KW-0999">Mitochondrion inner membrane</keyword>
<keyword id="KW-0679">Respiratory chain</keyword>
<keyword id="KW-1278">Translocase</keyword>
<keyword id="KW-0812">Transmembrane</keyword>
<keyword id="KW-1133">Transmembrane helix</keyword>
<keyword id="KW-0813">Transport</keyword>
<sequence length="227" mass="26434">MATWSNFNLQNSASPLMEQIIFFHDHTLVILIMITILVGYLMISLFFNSYINRFLLEGQMIELIWTILPAITLIFIALPSLRLLYLLDELNNPLITLKSIGHQWYWSYEYSDFQNIQFDSYMIPINEMKNNNFRLLDVDNRIVLPMNNQIRILVTATDVIHSWTIPSLGVKVDANPGRLNQTNFFINRPGIFYGQCSEICGANHSFMPIVIESISIKNFINWINNYS</sequence>
<organism>
    <name type="scientific">Choristoneura occidentalis</name>
    <name type="common">Western spruce budworm</name>
    <dbReference type="NCBI Taxonomy" id="27541"/>
    <lineage>
        <taxon>Eukaryota</taxon>
        <taxon>Metazoa</taxon>
        <taxon>Ecdysozoa</taxon>
        <taxon>Arthropoda</taxon>
        <taxon>Hexapoda</taxon>
        <taxon>Insecta</taxon>
        <taxon>Pterygota</taxon>
        <taxon>Neoptera</taxon>
        <taxon>Endopterygota</taxon>
        <taxon>Lepidoptera</taxon>
        <taxon>Glossata</taxon>
        <taxon>Ditrysia</taxon>
        <taxon>Tortricoidea</taxon>
        <taxon>Tortricidae</taxon>
        <taxon>Tortricinae</taxon>
        <taxon>Choristoneura</taxon>
    </lineage>
</organism>
<gene>
    <name type="primary">COII</name>
</gene>
<reference key="1">
    <citation type="journal article" date="1994" name="Mol. Biol. Evol.">
        <title>Mitochondrial DNA sequence variation in the spruce budworm species complex (Choristoneura: Lepidoptera).</title>
        <authorList>
            <person name="Sperling F.A.H."/>
            <person name="Hickey D.A."/>
        </authorList>
    </citation>
    <scope>NUCLEOTIDE SEQUENCE [GENOMIC DNA]</scope>
    <scope>VARIANT ILE-143</scope>
    <source>
        <strain>16</strain>
    </source>
</reference>
<protein>
    <recommendedName>
        <fullName>Cytochrome c oxidase subunit 2</fullName>
        <ecNumber>7.1.1.9</ecNumber>
    </recommendedName>
    <alternativeName>
        <fullName>Cytochrome c oxidase polypeptide II</fullName>
    </alternativeName>
</protein>
<geneLocation type="mitochondrion"/>
<accession>P84289</accession>
<accession>P98026</accession>
<proteinExistence type="inferred from homology"/>
<name>COX2_CHOOC</name>
<feature type="chain" id="PRO_0000183551" description="Cytochrome c oxidase subunit 2">
    <location>
        <begin position="1"/>
        <end position="227"/>
    </location>
</feature>
<feature type="topological domain" description="Mitochondrial intermembrane" evidence="2">
    <location>
        <begin position="1"/>
        <end position="26"/>
    </location>
</feature>
<feature type="transmembrane region" description="Helical" evidence="2">
    <location>
        <begin position="27"/>
        <end position="51"/>
    </location>
</feature>
<feature type="topological domain" description="Mitochondrial matrix" evidence="2">
    <location>
        <begin position="52"/>
        <end position="62"/>
    </location>
</feature>
<feature type="transmembrane region" description="Helical" evidence="2">
    <location>
        <begin position="63"/>
        <end position="81"/>
    </location>
</feature>
<feature type="topological domain" description="Mitochondrial intermembrane" evidence="2">
    <location>
        <begin position="82"/>
        <end position="227"/>
    </location>
</feature>
<feature type="binding site" evidence="1">
    <location>
        <position position="161"/>
    </location>
    <ligand>
        <name>Cu cation</name>
        <dbReference type="ChEBI" id="CHEBI:23378"/>
        <label>A1</label>
    </ligand>
</feature>
<feature type="binding site" evidence="1">
    <location>
        <position position="196"/>
    </location>
    <ligand>
        <name>Cu cation</name>
        <dbReference type="ChEBI" id="CHEBI:23378"/>
        <label>A1</label>
    </ligand>
</feature>
<feature type="binding site" evidence="1">
    <location>
        <position position="196"/>
    </location>
    <ligand>
        <name>Cu cation</name>
        <dbReference type="ChEBI" id="CHEBI:23378"/>
        <label>A2</label>
    </ligand>
</feature>
<feature type="binding site" evidence="1">
    <location>
        <position position="198"/>
    </location>
    <ligand>
        <name>Cu cation</name>
        <dbReference type="ChEBI" id="CHEBI:23378"/>
        <label>A2</label>
    </ligand>
</feature>
<feature type="binding site" evidence="1">
    <location>
        <position position="198"/>
    </location>
    <ligand>
        <name>Mg(2+)</name>
        <dbReference type="ChEBI" id="CHEBI:18420"/>
        <note>ligand shared with subunit 1</note>
    </ligand>
</feature>
<feature type="binding site" evidence="1">
    <location>
        <position position="200"/>
    </location>
    <ligand>
        <name>Cu cation</name>
        <dbReference type="ChEBI" id="CHEBI:23378"/>
        <label>A1</label>
    </ligand>
</feature>
<feature type="binding site" evidence="1">
    <location>
        <position position="200"/>
    </location>
    <ligand>
        <name>Cu cation</name>
        <dbReference type="ChEBI" id="CHEBI:23378"/>
        <label>A2</label>
    </ligand>
</feature>
<feature type="binding site" evidence="1">
    <location>
        <position position="204"/>
    </location>
    <ligand>
        <name>Cu cation</name>
        <dbReference type="ChEBI" id="CHEBI:23378"/>
        <label>A2</label>
    </ligand>
</feature>
<feature type="binding site" evidence="1">
    <location>
        <position position="207"/>
    </location>
    <ligand>
        <name>Cu cation</name>
        <dbReference type="ChEBI" id="CHEBI:23378"/>
        <label>A1</label>
    </ligand>
</feature>
<feature type="sequence variant" evidence="3">
    <original>V</original>
    <variation>I</variation>
    <location>
        <position position="143"/>
    </location>
</feature>
<evidence type="ECO:0000250" key="1">
    <source>
        <dbReference type="UniProtKB" id="P00410"/>
    </source>
</evidence>
<evidence type="ECO:0000255" key="2"/>
<evidence type="ECO:0000269" key="3">
    <source>
    </source>
</evidence>
<evidence type="ECO:0000305" key="4"/>
<dbReference type="EC" id="7.1.1.9"/>
<dbReference type="EMBL" id="L19094">
    <property type="protein sequence ID" value="AAA53647.1"/>
    <property type="molecule type" value="Genomic_DNA"/>
</dbReference>
<dbReference type="EMBL" id="L19097">
    <property type="protein sequence ID" value="AAA53643.1"/>
    <property type="molecule type" value="Genomic_DNA"/>
</dbReference>
<dbReference type="SMR" id="P84289"/>
<dbReference type="GO" id="GO:0005743">
    <property type="term" value="C:mitochondrial inner membrane"/>
    <property type="evidence" value="ECO:0007669"/>
    <property type="project" value="UniProtKB-SubCell"/>
</dbReference>
<dbReference type="GO" id="GO:0005507">
    <property type="term" value="F:copper ion binding"/>
    <property type="evidence" value="ECO:0007669"/>
    <property type="project" value="InterPro"/>
</dbReference>
<dbReference type="GO" id="GO:0004129">
    <property type="term" value="F:cytochrome-c oxidase activity"/>
    <property type="evidence" value="ECO:0007669"/>
    <property type="project" value="UniProtKB-EC"/>
</dbReference>
<dbReference type="GO" id="GO:0042773">
    <property type="term" value="P:ATP synthesis coupled electron transport"/>
    <property type="evidence" value="ECO:0007669"/>
    <property type="project" value="TreeGrafter"/>
</dbReference>
<dbReference type="CDD" id="cd13912">
    <property type="entry name" value="CcO_II_C"/>
    <property type="match status" value="1"/>
</dbReference>
<dbReference type="FunFam" id="1.10.287.90:FF:000006">
    <property type="entry name" value="Cytochrome c oxidase subunit 2"/>
    <property type="match status" value="1"/>
</dbReference>
<dbReference type="FunFam" id="2.60.40.420:FF:000001">
    <property type="entry name" value="Cytochrome c oxidase subunit 2"/>
    <property type="match status" value="1"/>
</dbReference>
<dbReference type="Gene3D" id="1.10.287.90">
    <property type="match status" value="1"/>
</dbReference>
<dbReference type="Gene3D" id="2.60.40.420">
    <property type="entry name" value="Cupredoxins - blue copper proteins"/>
    <property type="match status" value="1"/>
</dbReference>
<dbReference type="InterPro" id="IPR045187">
    <property type="entry name" value="CcO_II"/>
</dbReference>
<dbReference type="InterPro" id="IPR002429">
    <property type="entry name" value="CcO_II-like_C"/>
</dbReference>
<dbReference type="InterPro" id="IPR034210">
    <property type="entry name" value="CcO_II_C"/>
</dbReference>
<dbReference type="InterPro" id="IPR001505">
    <property type="entry name" value="Copper_CuA"/>
</dbReference>
<dbReference type="InterPro" id="IPR008972">
    <property type="entry name" value="Cupredoxin"/>
</dbReference>
<dbReference type="InterPro" id="IPR014222">
    <property type="entry name" value="Cyt_c_oxidase_su2"/>
</dbReference>
<dbReference type="InterPro" id="IPR011759">
    <property type="entry name" value="Cyt_c_oxidase_su2_TM_dom"/>
</dbReference>
<dbReference type="InterPro" id="IPR036257">
    <property type="entry name" value="Cyt_c_oxidase_su2_TM_sf"/>
</dbReference>
<dbReference type="NCBIfam" id="TIGR02866">
    <property type="entry name" value="CoxB"/>
    <property type="match status" value="1"/>
</dbReference>
<dbReference type="PANTHER" id="PTHR22888:SF9">
    <property type="entry name" value="CYTOCHROME C OXIDASE SUBUNIT 2"/>
    <property type="match status" value="1"/>
</dbReference>
<dbReference type="PANTHER" id="PTHR22888">
    <property type="entry name" value="CYTOCHROME C OXIDASE, SUBUNIT II"/>
    <property type="match status" value="1"/>
</dbReference>
<dbReference type="Pfam" id="PF00116">
    <property type="entry name" value="COX2"/>
    <property type="match status" value="1"/>
</dbReference>
<dbReference type="Pfam" id="PF02790">
    <property type="entry name" value="COX2_TM"/>
    <property type="match status" value="1"/>
</dbReference>
<dbReference type="PRINTS" id="PR01166">
    <property type="entry name" value="CYCOXIDASEII"/>
</dbReference>
<dbReference type="SUPFAM" id="SSF49503">
    <property type="entry name" value="Cupredoxins"/>
    <property type="match status" value="1"/>
</dbReference>
<dbReference type="SUPFAM" id="SSF81464">
    <property type="entry name" value="Cytochrome c oxidase subunit II-like, transmembrane region"/>
    <property type="match status" value="1"/>
</dbReference>
<dbReference type="PROSITE" id="PS00078">
    <property type="entry name" value="COX2"/>
    <property type="match status" value="1"/>
</dbReference>
<dbReference type="PROSITE" id="PS50857">
    <property type="entry name" value="COX2_CUA"/>
    <property type="match status" value="1"/>
</dbReference>
<dbReference type="PROSITE" id="PS50999">
    <property type="entry name" value="COX2_TM"/>
    <property type="match status" value="1"/>
</dbReference>
<comment type="function">
    <text evidence="1">Component of the cytochrome c oxidase, the last enzyme in the mitochondrial electron transport chain which drives oxidative phosphorylation. The respiratory chain contains 3 multisubunit complexes succinate dehydrogenase (complex II, CII), ubiquinol-cytochrome c oxidoreductase (cytochrome b-c1 complex, complex III, CIII) and cytochrome c oxidase (complex IV, CIV), that cooperate to transfer electrons derived from NADH and succinate to molecular oxygen, creating an electrochemical gradient over the inner membrane that drives transmembrane transport and the ATP synthase. Cytochrome c oxidase is the component of the respiratory chain that catalyzes the reduction of oxygen to water. Electrons originating from reduced cytochrome c in the intermembrane space (IMS) are transferred via the dinuclear copper A center (CU(A)) of subunit 2 and heme A of subunit 1 to the active site in subunit 1, a binuclear center (BNC) formed by heme A3 and copper B (CU(B)). The BNC reduces molecular oxygen to 2 water molecules using 4 electrons from cytochrome c in the IMS and 4 protons from the mitochondrial matrix.</text>
</comment>
<comment type="catalytic activity">
    <reaction evidence="1">
        <text>4 Fe(II)-[cytochrome c] + O2 + 8 H(+)(in) = 4 Fe(III)-[cytochrome c] + 2 H2O + 4 H(+)(out)</text>
        <dbReference type="Rhea" id="RHEA:11436"/>
        <dbReference type="Rhea" id="RHEA-COMP:10350"/>
        <dbReference type="Rhea" id="RHEA-COMP:14399"/>
        <dbReference type="ChEBI" id="CHEBI:15377"/>
        <dbReference type="ChEBI" id="CHEBI:15378"/>
        <dbReference type="ChEBI" id="CHEBI:15379"/>
        <dbReference type="ChEBI" id="CHEBI:29033"/>
        <dbReference type="ChEBI" id="CHEBI:29034"/>
        <dbReference type="EC" id="7.1.1.9"/>
    </reaction>
    <physiologicalReaction direction="left-to-right" evidence="1">
        <dbReference type="Rhea" id="RHEA:11437"/>
    </physiologicalReaction>
</comment>
<comment type="cofactor">
    <cofactor evidence="1">
        <name>Cu cation</name>
        <dbReference type="ChEBI" id="CHEBI:23378"/>
    </cofactor>
    <text evidence="1">Binds a dinuclear copper A center per subunit.</text>
</comment>
<comment type="subunit">
    <text evidence="1">Component of the cytochrome c oxidase (complex IV, CIV), a multisubunit enzyme composed of a catalytic core of 3 subunits and several supernumerary subunits. The complex exists as a monomer or a dimer and forms supercomplexes (SCs) in the inner mitochondrial membrane with ubiquinol-cytochrome c oxidoreductase (cytochrome b-c1 complex, complex III, CIII).</text>
</comment>
<comment type="subcellular location">
    <subcellularLocation>
        <location evidence="1">Mitochondrion inner membrane</location>
        <topology evidence="1">Multi-pass membrane protein</topology>
    </subcellularLocation>
</comment>
<comment type="similarity">
    <text evidence="4">Belongs to the cytochrome c oxidase subunit 2 family.</text>
</comment>